<organism>
    <name type="scientific">Salinibacter ruber (strain DSM 13855 / M31)</name>
    <dbReference type="NCBI Taxonomy" id="309807"/>
    <lineage>
        <taxon>Bacteria</taxon>
        <taxon>Pseudomonadati</taxon>
        <taxon>Rhodothermota</taxon>
        <taxon>Rhodothermia</taxon>
        <taxon>Rhodothermales</taxon>
        <taxon>Salinibacteraceae</taxon>
        <taxon>Salinibacter</taxon>
    </lineage>
</organism>
<evidence type="ECO:0000255" key="1">
    <source>
        <dbReference type="HAMAP-Rule" id="MF_00222"/>
    </source>
</evidence>
<reference key="1">
    <citation type="journal article" date="2005" name="Proc. Natl. Acad. Sci. U.S.A.">
        <title>The genome of Salinibacter ruber: convergence and gene exchange among hyperhalophilic bacteria and archaea.</title>
        <authorList>
            <person name="Mongodin E.F."/>
            <person name="Nelson K.E."/>
            <person name="Daugherty S."/>
            <person name="DeBoy R.T."/>
            <person name="Wister J."/>
            <person name="Khouri H."/>
            <person name="Weidman J."/>
            <person name="Walsh D.A."/>
            <person name="Papke R.T."/>
            <person name="Sanchez Perez G."/>
            <person name="Sharma A.K."/>
            <person name="Nesbo C.L."/>
            <person name="MacLeod D."/>
            <person name="Bapteste E."/>
            <person name="Doolittle W.F."/>
            <person name="Charlebois R.L."/>
            <person name="Legault B."/>
            <person name="Rodriguez-Valera F."/>
        </authorList>
    </citation>
    <scope>NUCLEOTIDE SEQUENCE [LARGE SCALE GENOMIC DNA]</scope>
    <source>
        <strain>DSM 13855 / CECT 5946 / M31</strain>
    </source>
</reference>
<comment type="function">
    <text evidence="1">Involved in the biosynthesis of the chorismate, which leads to the biosynthesis of aromatic amino acids. Catalyzes the reversible NADPH linked reduction of 3-dehydroshikimate (DHSA) to yield shikimate (SA).</text>
</comment>
<comment type="catalytic activity">
    <reaction evidence="1">
        <text>shikimate + NADP(+) = 3-dehydroshikimate + NADPH + H(+)</text>
        <dbReference type="Rhea" id="RHEA:17737"/>
        <dbReference type="ChEBI" id="CHEBI:15378"/>
        <dbReference type="ChEBI" id="CHEBI:16630"/>
        <dbReference type="ChEBI" id="CHEBI:36208"/>
        <dbReference type="ChEBI" id="CHEBI:57783"/>
        <dbReference type="ChEBI" id="CHEBI:58349"/>
        <dbReference type="EC" id="1.1.1.25"/>
    </reaction>
</comment>
<comment type="pathway">
    <text evidence="1">Metabolic intermediate biosynthesis; chorismate biosynthesis; chorismate from D-erythrose 4-phosphate and phosphoenolpyruvate: step 4/7.</text>
</comment>
<comment type="subunit">
    <text evidence="1">Homodimer.</text>
</comment>
<comment type="similarity">
    <text evidence="1">Belongs to the shikimate dehydrogenase family.</text>
</comment>
<protein>
    <recommendedName>
        <fullName evidence="1">Shikimate dehydrogenase (NADP(+))</fullName>
        <shortName evidence="1">SDH</shortName>
        <ecNumber evidence="1">1.1.1.25</ecNumber>
    </recommendedName>
</protein>
<sequence>MPLDATTQLVTLLGHPVEHSLSPRIHNTAFRAQDVNAAYVATPVRPEALGDAVAGLRALQFLGANVTTPHKEAVLPVLDEVTERARAVGAVNTIVRDGGRLHGDNTDIAGFLRPLEERGGDALEGAPMLVFGAGGAARAVVYGLLSHYRPERLTIVARRPDQAEGLAADLAAHDPDGALRVSSFEEAALSVRTSRLVVNATPLGMAPDRRGQTPWPNPVDFTADHVVYDLVYTPEETRLLREAAAEGATPIGGLDMLVEQAAAAYRQWTDRGMPQAAVYDALRAD</sequence>
<dbReference type="EC" id="1.1.1.25" evidence="1"/>
<dbReference type="EMBL" id="CP000159">
    <property type="protein sequence ID" value="ABC43996.1"/>
    <property type="molecule type" value="Genomic_DNA"/>
</dbReference>
<dbReference type="RefSeq" id="WP_011405001.1">
    <property type="nucleotide sequence ID" value="NC_007677.1"/>
</dbReference>
<dbReference type="RefSeq" id="YP_446381.1">
    <property type="nucleotide sequence ID" value="NC_007677.1"/>
</dbReference>
<dbReference type="SMR" id="Q2S0A0"/>
<dbReference type="STRING" id="309807.SRU_2277"/>
<dbReference type="EnsemblBacteria" id="ABC43996">
    <property type="protein sequence ID" value="ABC43996"/>
    <property type="gene ID" value="SRU_2277"/>
</dbReference>
<dbReference type="KEGG" id="sru:SRU_2277"/>
<dbReference type="PATRIC" id="fig|309807.25.peg.2371"/>
<dbReference type="eggNOG" id="COG0169">
    <property type="taxonomic scope" value="Bacteria"/>
</dbReference>
<dbReference type="HOGENOM" id="CLU_044063_0_1_10"/>
<dbReference type="OrthoDB" id="9792692at2"/>
<dbReference type="UniPathway" id="UPA00053">
    <property type="reaction ID" value="UER00087"/>
</dbReference>
<dbReference type="Proteomes" id="UP000008674">
    <property type="component" value="Chromosome"/>
</dbReference>
<dbReference type="GO" id="GO:0005829">
    <property type="term" value="C:cytosol"/>
    <property type="evidence" value="ECO:0007669"/>
    <property type="project" value="TreeGrafter"/>
</dbReference>
<dbReference type="GO" id="GO:0050661">
    <property type="term" value="F:NADP binding"/>
    <property type="evidence" value="ECO:0007669"/>
    <property type="project" value="InterPro"/>
</dbReference>
<dbReference type="GO" id="GO:0004764">
    <property type="term" value="F:shikimate 3-dehydrogenase (NADP+) activity"/>
    <property type="evidence" value="ECO:0007669"/>
    <property type="project" value="UniProtKB-UniRule"/>
</dbReference>
<dbReference type="GO" id="GO:0008652">
    <property type="term" value="P:amino acid biosynthetic process"/>
    <property type="evidence" value="ECO:0007669"/>
    <property type="project" value="UniProtKB-KW"/>
</dbReference>
<dbReference type="GO" id="GO:0009073">
    <property type="term" value="P:aromatic amino acid family biosynthetic process"/>
    <property type="evidence" value="ECO:0007669"/>
    <property type="project" value="UniProtKB-KW"/>
</dbReference>
<dbReference type="GO" id="GO:0009423">
    <property type="term" value="P:chorismate biosynthetic process"/>
    <property type="evidence" value="ECO:0007669"/>
    <property type="project" value="UniProtKB-UniRule"/>
</dbReference>
<dbReference type="GO" id="GO:0019632">
    <property type="term" value="P:shikimate metabolic process"/>
    <property type="evidence" value="ECO:0007669"/>
    <property type="project" value="InterPro"/>
</dbReference>
<dbReference type="CDD" id="cd01065">
    <property type="entry name" value="NAD_bind_Shikimate_DH"/>
    <property type="match status" value="1"/>
</dbReference>
<dbReference type="Gene3D" id="3.40.50.10860">
    <property type="entry name" value="Leucine Dehydrogenase, chain A, domain 1"/>
    <property type="match status" value="1"/>
</dbReference>
<dbReference type="Gene3D" id="3.40.50.720">
    <property type="entry name" value="NAD(P)-binding Rossmann-like Domain"/>
    <property type="match status" value="1"/>
</dbReference>
<dbReference type="HAMAP" id="MF_00222">
    <property type="entry name" value="Shikimate_DH_AroE"/>
    <property type="match status" value="1"/>
</dbReference>
<dbReference type="InterPro" id="IPR046346">
    <property type="entry name" value="Aminoacid_DH-like_N_sf"/>
</dbReference>
<dbReference type="InterPro" id="IPR036291">
    <property type="entry name" value="NAD(P)-bd_dom_sf"/>
</dbReference>
<dbReference type="InterPro" id="IPR041121">
    <property type="entry name" value="SDH_C"/>
</dbReference>
<dbReference type="InterPro" id="IPR011342">
    <property type="entry name" value="Shikimate_DH"/>
</dbReference>
<dbReference type="InterPro" id="IPR013708">
    <property type="entry name" value="Shikimate_DH-bd_N"/>
</dbReference>
<dbReference type="InterPro" id="IPR022893">
    <property type="entry name" value="Shikimate_DH_fam"/>
</dbReference>
<dbReference type="NCBIfam" id="TIGR00507">
    <property type="entry name" value="aroE"/>
    <property type="match status" value="1"/>
</dbReference>
<dbReference type="NCBIfam" id="NF001314">
    <property type="entry name" value="PRK00258.2-2"/>
    <property type="match status" value="1"/>
</dbReference>
<dbReference type="PANTHER" id="PTHR21089:SF1">
    <property type="entry name" value="BIFUNCTIONAL 3-DEHYDROQUINATE DEHYDRATASE_SHIKIMATE DEHYDROGENASE, CHLOROPLASTIC"/>
    <property type="match status" value="1"/>
</dbReference>
<dbReference type="PANTHER" id="PTHR21089">
    <property type="entry name" value="SHIKIMATE DEHYDROGENASE"/>
    <property type="match status" value="1"/>
</dbReference>
<dbReference type="Pfam" id="PF18317">
    <property type="entry name" value="SDH_C"/>
    <property type="match status" value="1"/>
</dbReference>
<dbReference type="Pfam" id="PF08501">
    <property type="entry name" value="Shikimate_dh_N"/>
    <property type="match status" value="1"/>
</dbReference>
<dbReference type="SUPFAM" id="SSF53223">
    <property type="entry name" value="Aminoacid dehydrogenase-like, N-terminal domain"/>
    <property type="match status" value="1"/>
</dbReference>
<dbReference type="SUPFAM" id="SSF51735">
    <property type="entry name" value="NAD(P)-binding Rossmann-fold domains"/>
    <property type="match status" value="1"/>
</dbReference>
<keyword id="KW-0028">Amino-acid biosynthesis</keyword>
<keyword id="KW-0057">Aromatic amino acid biosynthesis</keyword>
<keyword id="KW-0521">NADP</keyword>
<keyword id="KW-0560">Oxidoreductase</keyword>
<keyword id="KW-1185">Reference proteome</keyword>
<gene>
    <name evidence="1" type="primary">aroE</name>
    <name type="ordered locus">SRU_2277</name>
</gene>
<proteinExistence type="inferred from homology"/>
<name>AROE_SALRD</name>
<accession>Q2S0A0</accession>
<feature type="chain" id="PRO_1000021330" description="Shikimate dehydrogenase (NADP(+))">
    <location>
        <begin position="1"/>
        <end position="285"/>
    </location>
</feature>
<feature type="active site" description="Proton acceptor" evidence="1">
    <location>
        <position position="71"/>
    </location>
</feature>
<feature type="binding site" evidence="1">
    <location>
        <begin position="20"/>
        <end position="22"/>
    </location>
    <ligand>
        <name>shikimate</name>
        <dbReference type="ChEBI" id="CHEBI:36208"/>
    </ligand>
</feature>
<feature type="binding site" evidence="1">
    <location>
        <position position="67"/>
    </location>
    <ligand>
        <name>shikimate</name>
        <dbReference type="ChEBI" id="CHEBI:36208"/>
    </ligand>
</feature>
<feature type="binding site" evidence="1">
    <location>
        <position position="83"/>
    </location>
    <ligand>
        <name>NADP(+)</name>
        <dbReference type="ChEBI" id="CHEBI:58349"/>
    </ligand>
</feature>
<feature type="binding site" evidence="1">
    <location>
        <position position="92"/>
    </location>
    <ligand>
        <name>shikimate</name>
        <dbReference type="ChEBI" id="CHEBI:36208"/>
    </ligand>
</feature>
<feature type="binding site" evidence="1">
    <location>
        <position position="107"/>
    </location>
    <ligand>
        <name>shikimate</name>
        <dbReference type="ChEBI" id="CHEBI:36208"/>
    </ligand>
</feature>
<feature type="binding site" evidence="1">
    <location>
        <begin position="132"/>
        <end position="136"/>
    </location>
    <ligand>
        <name>NADP(+)</name>
        <dbReference type="ChEBI" id="CHEBI:58349"/>
    </ligand>
</feature>
<feature type="binding site" evidence="1">
    <location>
        <position position="230"/>
    </location>
    <ligand>
        <name>NADP(+)</name>
        <dbReference type="ChEBI" id="CHEBI:58349"/>
    </ligand>
</feature>
<feature type="binding site" evidence="1">
    <location>
        <position position="232"/>
    </location>
    <ligand>
        <name>shikimate</name>
        <dbReference type="ChEBI" id="CHEBI:36208"/>
    </ligand>
</feature>
<feature type="binding site" evidence="1">
    <location>
        <position position="253"/>
    </location>
    <ligand>
        <name>NADP(+)</name>
        <dbReference type="ChEBI" id="CHEBI:58349"/>
    </ligand>
</feature>